<feature type="chain" id="PRO_0000060814" description="Cytochrome b">
    <location>
        <begin position="1"/>
        <end position="380"/>
    </location>
</feature>
<feature type="transmembrane region" description="Helical" evidence="2">
    <location>
        <begin position="34"/>
        <end position="54"/>
    </location>
</feature>
<feature type="transmembrane region" description="Helical" evidence="2">
    <location>
        <begin position="78"/>
        <end position="99"/>
    </location>
</feature>
<feature type="transmembrane region" description="Helical" evidence="2">
    <location>
        <begin position="114"/>
        <end position="134"/>
    </location>
</feature>
<feature type="transmembrane region" description="Helical" evidence="2">
    <location>
        <begin position="179"/>
        <end position="199"/>
    </location>
</feature>
<feature type="transmembrane region" description="Helical" evidence="2">
    <location>
        <begin position="227"/>
        <end position="247"/>
    </location>
</feature>
<feature type="transmembrane region" description="Helical" evidence="2">
    <location>
        <begin position="289"/>
        <end position="309"/>
    </location>
</feature>
<feature type="transmembrane region" description="Helical" evidence="2">
    <location>
        <begin position="321"/>
        <end position="341"/>
    </location>
</feature>
<feature type="transmembrane region" description="Helical" evidence="2">
    <location>
        <begin position="348"/>
        <end position="368"/>
    </location>
</feature>
<feature type="binding site" description="axial binding residue" evidence="2">
    <location>
        <position position="84"/>
    </location>
    <ligand>
        <name>heme b</name>
        <dbReference type="ChEBI" id="CHEBI:60344"/>
        <label>b562</label>
    </ligand>
    <ligandPart>
        <name>Fe</name>
        <dbReference type="ChEBI" id="CHEBI:18248"/>
    </ligandPart>
</feature>
<feature type="binding site" description="axial binding residue" evidence="2">
    <location>
        <position position="98"/>
    </location>
    <ligand>
        <name>heme b</name>
        <dbReference type="ChEBI" id="CHEBI:60344"/>
        <label>b566</label>
    </ligand>
    <ligandPart>
        <name>Fe</name>
        <dbReference type="ChEBI" id="CHEBI:18248"/>
    </ligandPart>
</feature>
<feature type="binding site" description="axial binding residue" evidence="2">
    <location>
        <position position="183"/>
    </location>
    <ligand>
        <name>heme b</name>
        <dbReference type="ChEBI" id="CHEBI:60344"/>
        <label>b562</label>
    </ligand>
    <ligandPart>
        <name>Fe</name>
        <dbReference type="ChEBI" id="CHEBI:18248"/>
    </ligandPart>
</feature>
<feature type="binding site" description="axial binding residue" evidence="2">
    <location>
        <position position="197"/>
    </location>
    <ligand>
        <name>heme b</name>
        <dbReference type="ChEBI" id="CHEBI:60344"/>
        <label>b566</label>
    </ligand>
    <ligandPart>
        <name>Fe</name>
        <dbReference type="ChEBI" id="CHEBI:18248"/>
    </ligandPart>
</feature>
<feature type="binding site" evidence="2">
    <location>
        <position position="202"/>
    </location>
    <ligand>
        <name>a ubiquinone</name>
        <dbReference type="ChEBI" id="CHEBI:16389"/>
    </ligand>
</feature>
<feature type="sequence variant" description="In strain: Isolate French.">
    <original>S</original>
    <variation>F</variation>
    <location>
        <position position="29"/>
    </location>
</feature>
<feature type="sequence variant" description="In strain: Isolate French.">
    <original>A</original>
    <variation>G</variation>
    <location>
        <position position="39"/>
    </location>
</feature>
<feature type="sequence variant" description="In strain: Isolate French.">
    <original>S</original>
    <variation>C</variation>
    <location>
        <position position="247"/>
    </location>
</feature>
<feature type="sequence variant" description="In strain: Isolate French.">
    <original>P</original>
    <variation>A</variation>
    <location>
        <position position="267"/>
    </location>
</feature>
<feature type="sequence conflict" description="In Ref. 2; BAB62926." evidence="5" ref="2">
    <original>P</original>
    <variation>S</variation>
    <location>
        <position position="286"/>
    </location>
</feature>
<feature type="sequence conflict" description="In Ref. 2; BAB62926." evidence="5" ref="2">
    <original>H</original>
    <variation>P</variation>
    <location>
        <position position="309"/>
    </location>
</feature>
<gene>
    <name type="primary">MT-CYB</name>
    <name type="synonym">COB</name>
    <name type="synonym">CYTB</name>
    <name type="synonym">MTCYB</name>
</gene>
<comment type="function">
    <text evidence="2">Component of the ubiquinol-cytochrome c reductase complex (complex III or cytochrome b-c1 complex) that is part of the mitochondrial respiratory chain. The b-c1 complex mediates electron transfer from ubiquinol to cytochrome c. Contributes to the generation of a proton gradient across the mitochondrial membrane that is then used for ATP synthesis.</text>
</comment>
<comment type="cofactor">
    <cofactor evidence="2">
        <name>heme b</name>
        <dbReference type="ChEBI" id="CHEBI:60344"/>
    </cofactor>
    <text evidence="2">Binds 2 heme b groups non-covalently.</text>
</comment>
<comment type="subunit">
    <text evidence="2">The cytochrome bc1 complex contains 11 subunits: 3 respiratory subunits (MT-CYB, CYC1 and UQCRFS1), 2 core proteins (UQCRC1 and UQCRC2) and 6 low-molecular weight proteins (UQCRH/QCR6, UQCRB/QCR7, UQCRQ/QCR8, UQCR10/QCR9, UQCR11/QCR10 and a cleavage product of UQCRFS1). This cytochrome bc1 complex then forms a dimer.</text>
</comment>
<comment type="subcellular location">
    <subcellularLocation>
        <location evidence="2">Mitochondrion inner membrane</location>
        <topology evidence="2">Multi-pass membrane protein</topology>
    </subcellularLocation>
</comment>
<comment type="miscellaneous">
    <text evidence="1">Heme 1 (or BL or b562) is low-potential and absorbs at about 562 nm, and heme 2 (or BH or b566) is high-potential and absorbs at about 566 nm.</text>
</comment>
<comment type="similarity">
    <text evidence="3 4">Belongs to the cytochrome b family.</text>
</comment>
<comment type="caution">
    <text evidence="2">The full-length protein contains only eight transmembrane helices, not nine as predicted by bioinformatics tools.</text>
</comment>
<sequence length="380" mass="42666">MAPNIRKSHPLLKMINNSLIDLPTPPNISAWWNFGSLLAMCLITQILTGLLLAMHYTADTSLAFSSVAHTCRNVQYGWLIRNLHANGASFFFICIFLHIGRGLYYGSYLYKETWNTGVILLLTLMATAFVGYVLPWGQMSFWGATVITNLFSAVPYIGQTLVEWAWGGFSVDNPTLTRFFALHFLLPFLIAGITIIHLTFLHESGSNNPLGISSDSDKIPFHPYYSIKDILGLTLMLTPFLTLALFSPNFLGDPENFTPANPLVTPPHIKPEWYFLFAYAILRSIPNKLGGVLALAASVLILLLIPFLHKSKQRTMTFRPLSQTLFWLLVANLLILTWIGSQPVEHPFIIIGQMASLSYFTILLILFPMIGMLENKMLNH</sequence>
<proteinExistence type="inferred from homology"/>
<keyword id="KW-0249">Electron transport</keyword>
<keyword id="KW-0349">Heme</keyword>
<keyword id="KW-0408">Iron</keyword>
<keyword id="KW-0472">Membrane</keyword>
<keyword id="KW-0479">Metal-binding</keyword>
<keyword id="KW-0496">Mitochondrion</keyword>
<keyword id="KW-0999">Mitochondrion inner membrane</keyword>
<keyword id="KW-1185">Reference proteome</keyword>
<keyword id="KW-0679">Respiratory chain</keyword>
<keyword id="KW-0812">Transmembrane</keyword>
<keyword id="KW-1133">Transmembrane helix</keyword>
<keyword id="KW-0813">Transport</keyword>
<keyword id="KW-0830">Ubiquinone</keyword>
<reference key="1">
    <citation type="journal article" date="1993" name="J. Mol. Evol.">
        <title>Pathways of lysozyme evolution inferred from the sequences of cytochrome b in birds.</title>
        <authorList>
            <person name="Kornegay J.R."/>
            <person name="Kocher T.D."/>
            <person name="Williams L.A."/>
            <person name="Wilson A.C."/>
        </authorList>
    </citation>
    <scope>NUCLEOTIDE SEQUENCE [GENOMIC DNA]</scope>
</reference>
<reference key="2">
    <citation type="journal article" date="2001" name="Anim. Genet.">
        <title>Complete sequence of the Japanese quail (Coturnix japonica) mitochondrial genome and its genetic relationship with related species.</title>
        <authorList>
            <person name="Nishibori M."/>
            <person name="Hayashi T."/>
            <person name="Tsudzuki M."/>
            <person name="Yamamoto Y."/>
            <person name="Yasue H."/>
        </authorList>
    </citation>
    <scope>NUCLEOTIDE SEQUENCE [GENOMIC DNA]</scope>
    <source>
        <tissue>Blood</tissue>
    </source>
</reference>
<reference key="3">
    <citation type="submission" date="1999-05" db="EMBL/GenBank/DDBJ databases">
        <title>Complete mitochondrial cytochrome b gene sequence in the wild type strain of Japanese quail (Coturnix japonica).</title>
        <authorList>
            <person name="Shen X.J."/>
            <person name="Nakamura T."/>
        </authorList>
    </citation>
    <scope>NUCLEOTIDE SEQUENCE [GENOMIC DNA]</scope>
</reference>
<reference key="4">
    <citation type="submission" date="1998-12" db="EMBL/GenBank/DDBJ databases">
        <title>Complete mitochondrial cytochrome b gene sequence in Estonian strain of quail (Coturnix japonica).</title>
        <authorList>
            <person name="Shen X.J."/>
            <person name="Nakamura T."/>
        </authorList>
    </citation>
    <scope>NUCLEOTIDE SEQUENCE [GENOMIC DNA]</scope>
    <source>
        <strain>Isolate Estonia</strain>
    </source>
</reference>
<reference key="5">
    <citation type="submission" date="1998-12" db="EMBL/GenBank/DDBJ databases">
        <title>Complete mitochondrial cytochrome b gene sequence in French strain of quail (Coturnix japonica).</title>
        <authorList>
            <person name="Shen X.J."/>
            <person name="Nakamura T."/>
        </authorList>
    </citation>
    <scope>NUCLEOTIDE SEQUENCE [GENOMIC DNA]</scope>
    <source>
        <strain>Isolate French</strain>
    </source>
</reference>
<reference key="6">
    <citation type="submission" date="1999-01" db="EMBL/GenBank/DDBJ databases">
        <title>Complete mitochondrial cytochrome b gene sequence in Canadian strain of quail (Coturnix japonica).</title>
        <authorList>
            <person name="Shen X.J."/>
            <person name="Nakamura T."/>
        </authorList>
    </citation>
    <scope>NUCLEOTIDE SEQUENCE [GENOMIC DNA]</scope>
    <source>
        <strain>Isolate Canadian</strain>
    </source>
</reference>
<organism>
    <name type="scientific">Coturnix japonica</name>
    <name type="common">Japanese quail</name>
    <name type="synonym">Coturnix coturnix japonica</name>
    <dbReference type="NCBI Taxonomy" id="93934"/>
    <lineage>
        <taxon>Eukaryota</taxon>
        <taxon>Metazoa</taxon>
        <taxon>Chordata</taxon>
        <taxon>Craniata</taxon>
        <taxon>Vertebrata</taxon>
        <taxon>Euteleostomi</taxon>
        <taxon>Archelosauria</taxon>
        <taxon>Archosauria</taxon>
        <taxon>Dinosauria</taxon>
        <taxon>Saurischia</taxon>
        <taxon>Theropoda</taxon>
        <taxon>Coelurosauria</taxon>
        <taxon>Aves</taxon>
        <taxon>Neognathae</taxon>
        <taxon>Galloanserae</taxon>
        <taxon>Galliformes</taxon>
        <taxon>Phasianidae</taxon>
        <taxon>Perdicinae</taxon>
        <taxon>Coturnix</taxon>
    </lineage>
</organism>
<name>CYB_COTJA</name>
<geneLocation type="mitochondrion"/>
<accession>P35075</accession>
<accession>Q8SEW3</accession>
<accession>Q9T888</accession>
<evidence type="ECO:0000250" key="1"/>
<evidence type="ECO:0000250" key="2">
    <source>
        <dbReference type="UniProtKB" id="P00157"/>
    </source>
</evidence>
<evidence type="ECO:0000255" key="3">
    <source>
        <dbReference type="PROSITE-ProRule" id="PRU00967"/>
    </source>
</evidence>
<evidence type="ECO:0000255" key="4">
    <source>
        <dbReference type="PROSITE-ProRule" id="PRU00968"/>
    </source>
</evidence>
<evidence type="ECO:0000305" key="5"/>
<dbReference type="EMBL" id="L08377">
    <property type="protein sequence ID" value="AAA18851.1"/>
    <property type="molecule type" value="Genomic_DNA"/>
</dbReference>
<dbReference type="EMBL" id="AP003195">
    <property type="protein sequence ID" value="BAB62926.1"/>
    <property type="molecule type" value="Genomic_DNA"/>
</dbReference>
<dbReference type="EMBL" id="AF149292">
    <property type="protein sequence ID" value="AAD41344.1"/>
    <property type="molecule type" value="Genomic_DNA"/>
</dbReference>
<dbReference type="EMBL" id="AF112363">
    <property type="protein sequence ID" value="AAF21953.1"/>
    <property type="molecule type" value="Genomic_DNA"/>
</dbReference>
<dbReference type="EMBL" id="AF112364">
    <property type="protein sequence ID" value="AAF21954.1"/>
    <property type="molecule type" value="Genomic_DNA"/>
</dbReference>
<dbReference type="EMBL" id="AF119094">
    <property type="protein sequence ID" value="AAF28846.1"/>
    <property type="molecule type" value="Genomic_DNA"/>
</dbReference>
<dbReference type="RefSeq" id="NP_572025.1">
    <property type="nucleotide sequence ID" value="NC_003408.1"/>
</dbReference>
<dbReference type="SMR" id="P35075"/>
<dbReference type="GeneID" id="804660"/>
<dbReference type="KEGG" id="cjo:804660"/>
<dbReference type="CTD" id="4519"/>
<dbReference type="OrthoDB" id="244at2759"/>
<dbReference type="Proteomes" id="UP000694412">
    <property type="component" value="Unplaced"/>
</dbReference>
<dbReference type="GO" id="GO:0005743">
    <property type="term" value="C:mitochondrial inner membrane"/>
    <property type="evidence" value="ECO:0007669"/>
    <property type="project" value="UniProtKB-SubCell"/>
</dbReference>
<dbReference type="GO" id="GO:0045275">
    <property type="term" value="C:respiratory chain complex III"/>
    <property type="evidence" value="ECO:0007669"/>
    <property type="project" value="InterPro"/>
</dbReference>
<dbReference type="GO" id="GO:0046872">
    <property type="term" value="F:metal ion binding"/>
    <property type="evidence" value="ECO:0007669"/>
    <property type="project" value="UniProtKB-KW"/>
</dbReference>
<dbReference type="GO" id="GO:0008121">
    <property type="term" value="F:ubiquinol-cytochrome-c reductase activity"/>
    <property type="evidence" value="ECO:0007669"/>
    <property type="project" value="InterPro"/>
</dbReference>
<dbReference type="GO" id="GO:0006122">
    <property type="term" value="P:mitochondrial electron transport, ubiquinol to cytochrome c"/>
    <property type="evidence" value="ECO:0007669"/>
    <property type="project" value="TreeGrafter"/>
</dbReference>
<dbReference type="CDD" id="cd00290">
    <property type="entry name" value="cytochrome_b_C"/>
    <property type="match status" value="1"/>
</dbReference>
<dbReference type="CDD" id="cd00284">
    <property type="entry name" value="Cytochrome_b_N"/>
    <property type="match status" value="1"/>
</dbReference>
<dbReference type="FunFam" id="1.20.810.10:FF:000002">
    <property type="entry name" value="Cytochrome b"/>
    <property type="match status" value="1"/>
</dbReference>
<dbReference type="Gene3D" id="1.20.810.10">
    <property type="entry name" value="Cytochrome Bc1 Complex, Chain C"/>
    <property type="match status" value="1"/>
</dbReference>
<dbReference type="InterPro" id="IPR005798">
    <property type="entry name" value="Cyt_b/b6_C"/>
</dbReference>
<dbReference type="InterPro" id="IPR036150">
    <property type="entry name" value="Cyt_b/b6_C_sf"/>
</dbReference>
<dbReference type="InterPro" id="IPR005797">
    <property type="entry name" value="Cyt_b/b6_N"/>
</dbReference>
<dbReference type="InterPro" id="IPR027387">
    <property type="entry name" value="Cytb/b6-like_sf"/>
</dbReference>
<dbReference type="InterPro" id="IPR030689">
    <property type="entry name" value="Cytochrome_b"/>
</dbReference>
<dbReference type="InterPro" id="IPR048260">
    <property type="entry name" value="Cytochrome_b_C_euk/bac"/>
</dbReference>
<dbReference type="InterPro" id="IPR048259">
    <property type="entry name" value="Cytochrome_b_N_euk/bac"/>
</dbReference>
<dbReference type="InterPro" id="IPR016174">
    <property type="entry name" value="Di-haem_cyt_TM"/>
</dbReference>
<dbReference type="PANTHER" id="PTHR19271">
    <property type="entry name" value="CYTOCHROME B"/>
    <property type="match status" value="1"/>
</dbReference>
<dbReference type="PANTHER" id="PTHR19271:SF16">
    <property type="entry name" value="CYTOCHROME B"/>
    <property type="match status" value="1"/>
</dbReference>
<dbReference type="Pfam" id="PF00032">
    <property type="entry name" value="Cytochrom_B_C"/>
    <property type="match status" value="1"/>
</dbReference>
<dbReference type="Pfam" id="PF00033">
    <property type="entry name" value="Cytochrome_B"/>
    <property type="match status" value="1"/>
</dbReference>
<dbReference type="PIRSF" id="PIRSF038885">
    <property type="entry name" value="COB"/>
    <property type="match status" value="1"/>
</dbReference>
<dbReference type="SUPFAM" id="SSF81648">
    <property type="entry name" value="a domain/subunit of cytochrome bc1 complex (Ubiquinol-cytochrome c reductase)"/>
    <property type="match status" value="1"/>
</dbReference>
<dbReference type="SUPFAM" id="SSF81342">
    <property type="entry name" value="Transmembrane di-heme cytochromes"/>
    <property type="match status" value="1"/>
</dbReference>
<dbReference type="PROSITE" id="PS51003">
    <property type="entry name" value="CYTB_CTER"/>
    <property type="match status" value="1"/>
</dbReference>
<dbReference type="PROSITE" id="PS51002">
    <property type="entry name" value="CYTB_NTER"/>
    <property type="match status" value="1"/>
</dbReference>
<protein>
    <recommendedName>
        <fullName>Cytochrome b</fullName>
    </recommendedName>
    <alternativeName>
        <fullName>Complex III subunit 3</fullName>
    </alternativeName>
    <alternativeName>
        <fullName>Complex III subunit III</fullName>
    </alternativeName>
    <alternativeName>
        <fullName>Cytochrome b-c1 complex subunit 3</fullName>
    </alternativeName>
    <alternativeName>
        <fullName>Ubiquinol-cytochrome-c reductase complex cytochrome b subunit</fullName>
    </alternativeName>
</protein>